<accession>P29760</accession>
<proteinExistence type="inferred from homology"/>
<reference key="1">
    <citation type="journal article" date="1994" name="Appl. Biochem. Biotechnol.">
        <title>Cloning of a new allelic variant of a Saccharomyces diastaticus glucoamylase gene and its introduction into industrial yeasts.</title>
        <authorList>
            <person name="Kim K."/>
            <person name="Bajszar G."/>
            <person name="Lee S.Y."/>
            <person name="Knudsen F."/>
            <person name="Mattoon J.R."/>
        </authorList>
    </citation>
    <scope>NUCLEOTIDE SEQUENCE [GENOMIC DNA]</scope>
    <source>
        <strain>Diastaticus</strain>
    </source>
</reference>
<reference key="2">
    <citation type="journal article" date="1991" name="Gene">
        <title>Primary structure and regulation of a glucoamylase-encoding gene (STA2) in Saccharomyces diastaticus.</title>
        <authorList>
            <person name="Lambrechts M.G."/>
            <person name="Pretorius I.S."/>
            <person name="Sollitti P."/>
            <person name="Marmur J."/>
        </authorList>
    </citation>
    <scope>NUCLEOTIDE SEQUENCE [GENOMIC DNA]</scope>
    <source>
        <strain>Diastaticus</strain>
    </source>
</reference>
<organism>
    <name type="scientific">Saccharomyces cerevisiae</name>
    <name type="common">Baker's yeast</name>
    <dbReference type="NCBI Taxonomy" id="4932"/>
    <lineage>
        <taxon>Eukaryota</taxon>
        <taxon>Fungi</taxon>
        <taxon>Dikarya</taxon>
        <taxon>Ascomycota</taxon>
        <taxon>Saccharomycotina</taxon>
        <taxon>Saccharomycetes</taxon>
        <taxon>Saccharomycetales</taxon>
        <taxon>Saccharomycetaceae</taxon>
        <taxon>Saccharomyces</taxon>
    </lineage>
</organism>
<comment type="catalytic activity">
    <reaction>
        <text>Hydrolysis of terminal (1-&gt;4)-linked alpha-D-glucose residues successively from non-reducing ends of the chains with release of beta-D-glucose.</text>
        <dbReference type="EC" id="3.2.1.3"/>
    </reaction>
</comment>
<comment type="similarity">
    <text evidence="5">Belongs to the glycosyl hydrolase 15 family.</text>
</comment>
<gene>
    <name type="primary">STA2</name>
    <name type="synonym">DEX1</name>
</gene>
<protein>
    <recommendedName>
        <fullName>Glucoamylase S2</fullName>
        <ecNumber>3.2.1.3</ecNumber>
    </recommendedName>
    <alternativeName>
        <fullName>1,4-alpha-D-glucan glucohydrolase</fullName>
    </alternativeName>
    <alternativeName>
        <fullName>GAII</fullName>
    </alternativeName>
    <alternativeName>
        <fullName>Glucan 1,4-alpha-glucosidase</fullName>
    </alternativeName>
</protein>
<evidence type="ECO:0000250" key="1"/>
<evidence type="ECO:0000255" key="2"/>
<evidence type="ECO:0000255" key="3">
    <source>
        <dbReference type="PROSITE-ProRule" id="PRU10051"/>
    </source>
</evidence>
<evidence type="ECO:0000256" key="4">
    <source>
        <dbReference type="SAM" id="MobiDB-lite"/>
    </source>
</evidence>
<evidence type="ECO:0000305" key="5"/>
<keyword id="KW-0119">Carbohydrate metabolism</keyword>
<keyword id="KW-0325">Glycoprotein</keyword>
<keyword id="KW-0326">Glycosidase</keyword>
<keyword id="KW-0378">Hydrolase</keyword>
<keyword id="KW-0624">Polysaccharide degradation</keyword>
<keyword id="KW-0732">Signal</keyword>
<name>AMYI_YEASX</name>
<feature type="signal peptide">
    <location>
        <begin position="1"/>
        <end position="21"/>
    </location>
</feature>
<feature type="chain" id="PRO_0000001478" description="Glucoamylase S2">
    <location>
        <begin position="22"/>
        <end position="768"/>
    </location>
</feature>
<feature type="region of interest" description="Disordered" evidence="4">
    <location>
        <begin position="29"/>
        <end position="83"/>
    </location>
</feature>
<feature type="region of interest" description="Disordered" evidence="4">
    <location>
        <begin position="125"/>
        <end position="149"/>
    </location>
</feature>
<feature type="region of interest" description="H subunit">
    <location>
        <begin position="349"/>
        <end position="692"/>
    </location>
</feature>
<feature type="region of interest" description="Y subunit">
    <location>
        <begin position="693"/>
        <end position="768"/>
    </location>
</feature>
<feature type="compositionally biased region" description="Low complexity" evidence="4">
    <location>
        <begin position="30"/>
        <end position="48"/>
    </location>
</feature>
<feature type="compositionally biased region" description="Polar residues" evidence="4">
    <location>
        <begin position="49"/>
        <end position="66"/>
    </location>
</feature>
<feature type="compositionally biased region" description="Low complexity" evidence="4">
    <location>
        <begin position="71"/>
        <end position="83"/>
    </location>
</feature>
<feature type="compositionally biased region" description="Low complexity" evidence="4">
    <location>
        <begin position="131"/>
        <end position="149"/>
    </location>
</feature>
<feature type="active site" description="Proton acceptor" evidence="3">
    <location>
        <position position="519"/>
    </location>
</feature>
<feature type="active site" description="Proton donor" evidence="3">
    <location>
        <position position="522"/>
    </location>
</feature>
<feature type="binding site" evidence="1">
    <location>
        <position position="456"/>
    </location>
    <ligand>
        <name>substrate</name>
    </ligand>
</feature>
<feature type="glycosylation site" description="N-linked (GlcNAc...) asparagine" evidence="2">
    <location>
        <position position="35"/>
    </location>
</feature>
<feature type="glycosylation site" description="N-linked (GlcNAc...) asparagine" evidence="2">
    <location>
        <position position="309"/>
    </location>
</feature>
<feature type="glycosylation site" description="N-linked (GlcNAc...) asparagine" evidence="2">
    <location>
        <position position="323"/>
    </location>
</feature>
<feature type="glycosylation site" description="N-linked (GlcNAc...) asparagine" evidence="2">
    <location>
        <position position="415"/>
    </location>
</feature>
<feature type="glycosylation site" description="N-linked (GlcNAc...) asparagine" evidence="2">
    <location>
        <position position="424"/>
    </location>
</feature>
<feature type="glycosylation site" description="N-linked (GlcNAc...) asparagine" evidence="2">
    <location>
        <position position="435"/>
    </location>
</feature>
<feature type="glycosylation site" description="N-linked (GlcNAc...) asparagine" evidence="2">
    <location>
        <position position="514"/>
    </location>
</feature>
<feature type="glycosylation site" description="N-linked (GlcNAc...) asparagine" evidence="2">
    <location>
        <position position="547"/>
    </location>
</feature>
<feature type="glycosylation site" description="N-linked (GlcNAc...) asparagine" evidence="2">
    <location>
        <position position="646"/>
    </location>
</feature>
<feature type="glycosylation site" description="N-linked (GlcNAc...) asparagine" evidence="2">
    <location>
        <position position="651"/>
    </location>
</feature>
<feature type="glycosylation site" description="N-linked (GlcNAc...) asparagine" evidence="2">
    <location>
        <position position="721"/>
    </location>
</feature>
<feature type="glycosylation site" description="N-linked (GlcNAc...) asparagine" evidence="2">
    <location>
        <position position="742"/>
    </location>
</feature>
<feature type="sequence conflict" description="In Ref. 1; AAA35107." evidence="5" ref="1">
    <location>
        <position position="164"/>
    </location>
</feature>
<feature type="sequence conflict" description="In Ref. 1; AAA35107." evidence="5" ref="1">
    <original>D</original>
    <variation>N</variation>
    <location>
        <position position="624"/>
    </location>
</feature>
<dbReference type="EC" id="3.2.1.3"/>
<dbReference type="EMBL" id="M60650">
    <property type="protein sequence ID" value="AAA35107.1"/>
    <property type="molecule type" value="Genomic_DNA"/>
</dbReference>
<dbReference type="EMBL" id="M90490">
    <property type="protein sequence ID" value="AAA20560.1"/>
    <property type="molecule type" value="Genomic_DNA"/>
</dbReference>
<dbReference type="PIR" id="JU0474">
    <property type="entry name" value="JU0474"/>
</dbReference>
<dbReference type="SMR" id="P29760"/>
<dbReference type="CAZy" id="GH15">
    <property type="family name" value="Glycoside Hydrolase Family 15"/>
</dbReference>
<dbReference type="GlyCosmos" id="P29760">
    <property type="glycosylation" value="12 sites, No reported glycans"/>
</dbReference>
<dbReference type="VEuPathDB" id="FungiDB:YIL099W"/>
<dbReference type="GO" id="GO:0000324">
    <property type="term" value="C:fungal-type vacuole"/>
    <property type="evidence" value="ECO:0007669"/>
    <property type="project" value="TreeGrafter"/>
</dbReference>
<dbReference type="GO" id="GO:0004339">
    <property type="term" value="F:glucan 1,4-alpha-glucosidase activity"/>
    <property type="evidence" value="ECO:0007669"/>
    <property type="project" value="UniProtKB-EC"/>
</dbReference>
<dbReference type="GO" id="GO:0000272">
    <property type="term" value="P:polysaccharide catabolic process"/>
    <property type="evidence" value="ECO:0007669"/>
    <property type="project" value="UniProtKB-KW"/>
</dbReference>
<dbReference type="Gene3D" id="1.50.10.10">
    <property type="match status" value="1"/>
</dbReference>
<dbReference type="InterPro" id="IPR008928">
    <property type="entry name" value="6-hairpin_glycosidase_sf"/>
</dbReference>
<dbReference type="InterPro" id="IPR012341">
    <property type="entry name" value="6hp_glycosidase-like_sf"/>
</dbReference>
<dbReference type="InterPro" id="IPR011613">
    <property type="entry name" value="GH15-like"/>
</dbReference>
<dbReference type="InterPro" id="IPR000165">
    <property type="entry name" value="Glucoamylase"/>
</dbReference>
<dbReference type="InterPro" id="IPR046966">
    <property type="entry name" value="Glucoamylase_active_site"/>
</dbReference>
<dbReference type="PANTHER" id="PTHR31616:SF9">
    <property type="entry name" value="GLUCOAMYLASE, INTRACELLULAR SPORULATION-SPECIFIC"/>
    <property type="match status" value="1"/>
</dbReference>
<dbReference type="PANTHER" id="PTHR31616">
    <property type="entry name" value="TREHALASE"/>
    <property type="match status" value="1"/>
</dbReference>
<dbReference type="Pfam" id="PF00723">
    <property type="entry name" value="Glyco_hydro_15"/>
    <property type="match status" value="1"/>
</dbReference>
<dbReference type="PRINTS" id="PR00736">
    <property type="entry name" value="GLHYDRLASE15"/>
</dbReference>
<dbReference type="SUPFAM" id="SSF48208">
    <property type="entry name" value="Six-hairpin glycosidases"/>
    <property type="match status" value="1"/>
</dbReference>
<dbReference type="PROSITE" id="PS00820">
    <property type="entry name" value="GLUCOAMYLASE"/>
    <property type="match status" value="1"/>
</dbReference>
<sequence length="768" mass="82587">MQRPFLLAYLVLSLLFNSALGFPTALVPRGSSSSNITSSGPSSTPFSSATESFSTGTTVTPSSSKYPGSKTETSVSSTTETTIVPTTTTTSVITPSTTTITTTVCSTGTNSAGETTSGCSPKTITTTVPCSTSPSETASESTTTSPTTPVTTVVSTTVVTTEYASTSTKQGGEITTTFVTKNIPTTYLTTIAPTSSVTTVTNFTPTTITTTVCSTGTNSAGETTSGCSPKTVTTTVPCSTGTGEYTTEATAPVTTAVTTTVVTTESSTGTNSAGKTTTSYTTKSVPTTYVFDFGKGILDQSCGGVFSNNGSSQVQLRDVVLMNGTVVYDSNGAWDSSPLEEWLQRQKKVSIERIFENIGPSAVYPSILPGVVIASPSQTHPDYFYQWIRDSALTINSIVSHSADPAIETLLQYLNVSFHLQRTNNTLGAGIGYTNDTVALGDPKWNVDNTAFTEPWGRPQNDGPALRSIAILKIIDYIKQSGTDLGAKYPFQSTADIFDDIVRWDLRFIIDHWNSSGFDLWEEVNGMHFFTLLVQLSAVDRSLSYFNASERSSPFVEELRQTRRDISKFLVDPANGFINGKYNYIVETPMIADTLRSGLDISTLLAANTVHDAPSASHLPFDIDDPAVLNTLHHLMLHMRSIYPINDSSKNATGIALGRYPEDVYDGYGVGEGNPWVLATCAASTTLYQLIYRHISEQHDLVVPMNNDCSNAFWSELVFSNLTTLGNDEGYLILEFNTPAFNQTIQKIFQLADSFLVKLKATWEQTGN</sequence>